<sequence length="404" mass="43834">MPRLPGRGGPLMLFDSARRGTAASAPTGTGTMYVCGITPYDATHLGHAATMITFDLIQRVWRDAGLDVTYVQNVTDIDDPLLERAARDGEDWKVLAMRETALFREDMEALRIIPPEHYVGAVESIPDIAERVLMLVKEGAAYRLEDGTGDVYFDISATPRFGYESHLSREQMLEIFPERGGDPDRAGKRDPLDPLLWRGARADEPSWPGGDLGPGRPGWHIECAVIALNLLGAQIDVQGGGNDLIFPHHECSAAHAELLTGQTPFARHYVHAGMIGLDGEKMSKSRGNLVFVSRLRADQVDPMAVRLALMSGHYHSDRSWNDELLATAQKRLGRWRKAAAMPCGPSAEAFLAALRGRLADDLDSPGALAAADSWAEAALVGVGDDPAAPTLFTRALDALLGVRL</sequence>
<organism>
    <name type="scientific">Salinispora tropica (strain ATCC BAA-916 / DSM 44818 / JCM 13857 / NBRC 105044 / CNB-440)</name>
    <dbReference type="NCBI Taxonomy" id="369723"/>
    <lineage>
        <taxon>Bacteria</taxon>
        <taxon>Bacillati</taxon>
        <taxon>Actinomycetota</taxon>
        <taxon>Actinomycetes</taxon>
        <taxon>Micromonosporales</taxon>
        <taxon>Micromonosporaceae</taxon>
        <taxon>Salinispora</taxon>
    </lineage>
</organism>
<keyword id="KW-0067">ATP-binding</keyword>
<keyword id="KW-0436">Ligase</keyword>
<keyword id="KW-0479">Metal-binding</keyword>
<keyword id="KW-0547">Nucleotide-binding</keyword>
<keyword id="KW-1185">Reference proteome</keyword>
<keyword id="KW-0862">Zinc</keyword>
<protein>
    <recommendedName>
        <fullName evidence="1">L-cysteine:1D-myo-inositol 2-amino-2-deoxy-alpha-D-glucopyranoside ligase</fullName>
        <shortName evidence="1">L-Cys:GlcN-Ins ligase</shortName>
        <ecNumber evidence="1">6.3.1.13</ecNumber>
    </recommendedName>
    <alternativeName>
        <fullName evidence="1">Mycothiol ligase</fullName>
        <shortName evidence="1">MSH ligase</shortName>
    </alternativeName>
</protein>
<feature type="chain" id="PRO_0000400482" description="L-cysteine:1D-myo-inositol 2-amino-2-deoxy-alpha-D-glucopyranoside ligase">
    <location>
        <begin position="1"/>
        <end position="404"/>
    </location>
</feature>
<feature type="short sequence motif" description="'HIGH' region" evidence="1">
    <location>
        <begin position="37"/>
        <end position="47"/>
    </location>
</feature>
<feature type="short sequence motif" description="'ERGGDP' region" evidence="1">
    <location>
        <begin position="178"/>
        <end position="183"/>
    </location>
</feature>
<feature type="short sequence motif" description="'KMSKS' region" evidence="1">
    <location>
        <begin position="281"/>
        <end position="285"/>
    </location>
</feature>
<feature type="binding site" evidence="1">
    <location>
        <begin position="35"/>
        <end position="38"/>
    </location>
    <ligand>
        <name>L-cysteinyl-5'-AMP</name>
        <dbReference type="ChEBI" id="CHEBI:144924"/>
    </ligand>
</feature>
<feature type="binding site" evidence="1">
    <location>
        <position position="35"/>
    </location>
    <ligand>
        <name>Zn(2+)</name>
        <dbReference type="ChEBI" id="CHEBI:29105"/>
    </ligand>
</feature>
<feature type="binding site" evidence="1">
    <location>
        <position position="50"/>
    </location>
    <ligand>
        <name>L-cysteinyl-5'-AMP</name>
        <dbReference type="ChEBI" id="CHEBI:144924"/>
    </ligand>
</feature>
<feature type="binding site" evidence="1">
    <location>
        <begin position="73"/>
        <end position="75"/>
    </location>
    <ligand>
        <name>L-cysteinyl-5'-AMP</name>
        <dbReference type="ChEBI" id="CHEBI:144924"/>
    </ligand>
</feature>
<feature type="binding site" evidence="1">
    <location>
        <position position="219"/>
    </location>
    <ligand>
        <name>L-cysteinyl-5'-AMP</name>
        <dbReference type="ChEBI" id="CHEBI:144924"/>
    </ligand>
</feature>
<feature type="binding site" evidence="1">
    <location>
        <position position="223"/>
    </location>
    <ligand>
        <name>Zn(2+)</name>
        <dbReference type="ChEBI" id="CHEBI:29105"/>
    </ligand>
</feature>
<feature type="binding site" evidence="1">
    <location>
        <begin position="241"/>
        <end position="243"/>
    </location>
    <ligand>
        <name>L-cysteinyl-5'-AMP</name>
        <dbReference type="ChEBI" id="CHEBI:144924"/>
    </ligand>
</feature>
<feature type="binding site" evidence="1">
    <location>
        <position position="248"/>
    </location>
    <ligand>
        <name>Zn(2+)</name>
        <dbReference type="ChEBI" id="CHEBI:29105"/>
    </ligand>
</feature>
<feature type="binding site" evidence="1">
    <location>
        <position position="275"/>
    </location>
    <ligand>
        <name>L-cysteinyl-5'-AMP</name>
        <dbReference type="ChEBI" id="CHEBI:144924"/>
    </ligand>
</feature>
<gene>
    <name evidence="1" type="primary">mshC</name>
    <name type="ordered locus">Strop_2168</name>
</gene>
<dbReference type="EC" id="6.3.1.13" evidence="1"/>
<dbReference type="EMBL" id="CP000667">
    <property type="protein sequence ID" value="ABP54619.1"/>
    <property type="molecule type" value="Genomic_DNA"/>
</dbReference>
<dbReference type="SMR" id="A4X6W9"/>
<dbReference type="STRING" id="369723.Strop_2168"/>
<dbReference type="KEGG" id="stp:Strop_2168"/>
<dbReference type="eggNOG" id="COG0215">
    <property type="taxonomic scope" value="Bacteria"/>
</dbReference>
<dbReference type="HOGENOM" id="CLU_013528_0_0_11"/>
<dbReference type="Proteomes" id="UP000000235">
    <property type="component" value="Chromosome"/>
</dbReference>
<dbReference type="GO" id="GO:0005829">
    <property type="term" value="C:cytosol"/>
    <property type="evidence" value="ECO:0007669"/>
    <property type="project" value="TreeGrafter"/>
</dbReference>
<dbReference type="GO" id="GO:0005524">
    <property type="term" value="F:ATP binding"/>
    <property type="evidence" value="ECO:0007669"/>
    <property type="project" value="UniProtKB-KW"/>
</dbReference>
<dbReference type="GO" id="GO:0035446">
    <property type="term" value="F:cysteine-glucosaminylinositol ligase activity"/>
    <property type="evidence" value="ECO:0007669"/>
    <property type="project" value="UniProtKB-UniRule"/>
</dbReference>
<dbReference type="GO" id="GO:0004817">
    <property type="term" value="F:cysteine-tRNA ligase activity"/>
    <property type="evidence" value="ECO:0007669"/>
    <property type="project" value="TreeGrafter"/>
</dbReference>
<dbReference type="GO" id="GO:0008270">
    <property type="term" value="F:zinc ion binding"/>
    <property type="evidence" value="ECO:0007669"/>
    <property type="project" value="UniProtKB-UniRule"/>
</dbReference>
<dbReference type="GO" id="GO:0006423">
    <property type="term" value="P:cysteinyl-tRNA aminoacylation"/>
    <property type="evidence" value="ECO:0007669"/>
    <property type="project" value="TreeGrafter"/>
</dbReference>
<dbReference type="GO" id="GO:0010125">
    <property type="term" value="P:mycothiol biosynthetic process"/>
    <property type="evidence" value="ECO:0007669"/>
    <property type="project" value="UniProtKB-UniRule"/>
</dbReference>
<dbReference type="CDD" id="cd00672">
    <property type="entry name" value="CysRS_core"/>
    <property type="match status" value="1"/>
</dbReference>
<dbReference type="FunFam" id="3.40.50.620:FF:000134">
    <property type="entry name" value="L-cysteine:1D-myo-inositol 2-amino-2-deoxy-alpha-D-glucopyranoside ligase"/>
    <property type="match status" value="1"/>
</dbReference>
<dbReference type="Gene3D" id="1.20.120.640">
    <property type="entry name" value="Anticodon-binding domain of a subclass of class I aminoacyl-tRNA synthetases"/>
    <property type="match status" value="1"/>
</dbReference>
<dbReference type="Gene3D" id="3.40.50.620">
    <property type="entry name" value="HUPs"/>
    <property type="match status" value="1"/>
</dbReference>
<dbReference type="HAMAP" id="MF_01697">
    <property type="entry name" value="MshC"/>
    <property type="match status" value="1"/>
</dbReference>
<dbReference type="InterPro" id="IPR024909">
    <property type="entry name" value="Cys-tRNA/MSH_ligase"/>
</dbReference>
<dbReference type="InterPro" id="IPR017812">
    <property type="entry name" value="Mycothiol_ligase_MshC"/>
</dbReference>
<dbReference type="InterPro" id="IPR014729">
    <property type="entry name" value="Rossmann-like_a/b/a_fold"/>
</dbReference>
<dbReference type="InterPro" id="IPR032678">
    <property type="entry name" value="tRNA-synt_1_cat_dom"/>
</dbReference>
<dbReference type="NCBIfam" id="TIGR03447">
    <property type="entry name" value="mycothiol_MshC"/>
    <property type="match status" value="1"/>
</dbReference>
<dbReference type="PANTHER" id="PTHR10890:SF3">
    <property type="entry name" value="CYSTEINE--TRNA LIGASE, CYTOPLASMIC"/>
    <property type="match status" value="1"/>
</dbReference>
<dbReference type="PANTHER" id="PTHR10890">
    <property type="entry name" value="CYSTEINYL-TRNA SYNTHETASE"/>
    <property type="match status" value="1"/>
</dbReference>
<dbReference type="Pfam" id="PF01406">
    <property type="entry name" value="tRNA-synt_1e"/>
    <property type="match status" value="1"/>
</dbReference>
<dbReference type="PRINTS" id="PR00983">
    <property type="entry name" value="TRNASYNTHCYS"/>
</dbReference>
<dbReference type="SUPFAM" id="SSF52374">
    <property type="entry name" value="Nucleotidylyl transferase"/>
    <property type="match status" value="1"/>
</dbReference>
<comment type="function">
    <text evidence="1">Catalyzes the ATP-dependent condensation of GlcN-Ins and L-cysteine to form L-Cys-GlcN-Ins.</text>
</comment>
<comment type="catalytic activity">
    <reaction evidence="1">
        <text>1D-myo-inositol 2-amino-2-deoxy-alpha-D-glucopyranoside + L-cysteine + ATP = 1D-myo-inositol 2-(L-cysteinylamino)-2-deoxy-alpha-D-glucopyranoside + AMP + diphosphate + H(+)</text>
        <dbReference type="Rhea" id="RHEA:26176"/>
        <dbReference type="ChEBI" id="CHEBI:15378"/>
        <dbReference type="ChEBI" id="CHEBI:30616"/>
        <dbReference type="ChEBI" id="CHEBI:33019"/>
        <dbReference type="ChEBI" id="CHEBI:35235"/>
        <dbReference type="ChEBI" id="CHEBI:58886"/>
        <dbReference type="ChEBI" id="CHEBI:58887"/>
        <dbReference type="ChEBI" id="CHEBI:456215"/>
        <dbReference type="EC" id="6.3.1.13"/>
    </reaction>
</comment>
<comment type="cofactor">
    <cofactor evidence="1">
        <name>Zn(2+)</name>
        <dbReference type="ChEBI" id="CHEBI:29105"/>
    </cofactor>
    <text evidence="1">Binds 1 zinc ion per subunit.</text>
</comment>
<comment type="subunit">
    <text evidence="1">Monomer.</text>
</comment>
<comment type="similarity">
    <text evidence="1">Belongs to the class-I aminoacyl-tRNA synthetase family. MshC subfamily.</text>
</comment>
<evidence type="ECO:0000255" key="1">
    <source>
        <dbReference type="HAMAP-Rule" id="MF_01697"/>
    </source>
</evidence>
<reference key="1">
    <citation type="journal article" date="2007" name="Proc. Natl. Acad. Sci. U.S.A.">
        <title>Genome sequencing reveals complex secondary metabolome in the marine actinomycete Salinispora tropica.</title>
        <authorList>
            <person name="Udwary D.W."/>
            <person name="Zeigler L."/>
            <person name="Asolkar R.N."/>
            <person name="Singan V."/>
            <person name="Lapidus A."/>
            <person name="Fenical W."/>
            <person name="Jensen P.R."/>
            <person name="Moore B.S."/>
        </authorList>
    </citation>
    <scope>NUCLEOTIDE SEQUENCE [LARGE SCALE GENOMIC DNA]</scope>
    <source>
        <strain>ATCC BAA-916 / DSM 44818 / JCM 13857 / NBRC 105044 / CNB-440</strain>
    </source>
</reference>
<accession>A4X6W9</accession>
<proteinExistence type="inferred from homology"/>
<name>MSHC_SALTO</name>